<organism>
    <name type="scientific">Acinetobacter baumannii (strain AYE)</name>
    <dbReference type="NCBI Taxonomy" id="509173"/>
    <lineage>
        <taxon>Bacteria</taxon>
        <taxon>Pseudomonadati</taxon>
        <taxon>Pseudomonadota</taxon>
        <taxon>Gammaproteobacteria</taxon>
        <taxon>Moraxellales</taxon>
        <taxon>Moraxellaceae</taxon>
        <taxon>Acinetobacter</taxon>
        <taxon>Acinetobacter calcoaceticus/baumannii complex</taxon>
    </lineage>
</organism>
<proteinExistence type="inferred from homology"/>
<reference key="1">
    <citation type="journal article" date="2008" name="PLoS ONE">
        <title>Comparative analysis of Acinetobacters: three genomes for three lifestyles.</title>
        <authorList>
            <person name="Vallenet D."/>
            <person name="Nordmann P."/>
            <person name="Barbe V."/>
            <person name="Poirel L."/>
            <person name="Mangenot S."/>
            <person name="Bataille E."/>
            <person name="Dossat C."/>
            <person name="Gas S."/>
            <person name="Kreimeyer A."/>
            <person name="Lenoble P."/>
            <person name="Oztas S."/>
            <person name="Poulain J."/>
            <person name="Segurens B."/>
            <person name="Robert C."/>
            <person name="Abergel C."/>
            <person name="Claverie J.-M."/>
            <person name="Raoult D."/>
            <person name="Medigue C."/>
            <person name="Weissenbach J."/>
            <person name="Cruveiller S."/>
        </authorList>
    </citation>
    <scope>NUCLEOTIDE SEQUENCE [LARGE SCALE GENOMIC DNA]</scope>
    <source>
        <strain>AYE</strain>
    </source>
</reference>
<sequence>MRFVDEAVITVEAGDGGNGVASFRREKFVPFGGPDGGDGGRGGSIYIQADDDTSTLVDYRYTRKFRAERGKNGAGANCTGRGGEDVVLKVPVGTTIVDTDSGDIIGDLVEDGQRVMVASGGEGGLGNTHFKSSTNRAPRKCTTGTKGEFREIRLELKVLADVGLLGMPNAGKSTFIRAVSAAKPKVADYPFTTMVPNLGVVDADRHRSFVMADIPGLIEGAAEGAGLGIRFLKHLARTRILLHIIDVQPIDGSDPAHNAKAIMNELAKFSPTLAKLPIVLVLNKLDQIAEESREEWCQHILDELQWTGPVFKTSGLLEEGTKEVVYYLMDQIEQQREREVEDPEYAAEVRAFREQLEAETREQTIAAKEAYRAMRKAQRLESMMDDDDDFDDDEDDGDVESIYVRD</sequence>
<dbReference type="EC" id="3.6.5.-" evidence="1"/>
<dbReference type="EMBL" id="CU459141">
    <property type="protein sequence ID" value="CAM85906.1"/>
    <property type="molecule type" value="Genomic_DNA"/>
</dbReference>
<dbReference type="SMR" id="B0VCR5"/>
<dbReference type="EnsemblBacteria" id="CAM85906">
    <property type="protein sequence ID" value="CAM85906"/>
    <property type="gene ID" value="ABAYE0961"/>
</dbReference>
<dbReference type="KEGG" id="aby:ABAYE0961"/>
<dbReference type="HOGENOM" id="CLU_011747_2_0_6"/>
<dbReference type="GO" id="GO:0005737">
    <property type="term" value="C:cytoplasm"/>
    <property type="evidence" value="ECO:0007669"/>
    <property type="project" value="UniProtKB-SubCell"/>
</dbReference>
<dbReference type="GO" id="GO:0005525">
    <property type="term" value="F:GTP binding"/>
    <property type="evidence" value="ECO:0007669"/>
    <property type="project" value="UniProtKB-UniRule"/>
</dbReference>
<dbReference type="GO" id="GO:0003924">
    <property type="term" value="F:GTPase activity"/>
    <property type="evidence" value="ECO:0007669"/>
    <property type="project" value="UniProtKB-UniRule"/>
</dbReference>
<dbReference type="GO" id="GO:0000287">
    <property type="term" value="F:magnesium ion binding"/>
    <property type="evidence" value="ECO:0007669"/>
    <property type="project" value="InterPro"/>
</dbReference>
<dbReference type="GO" id="GO:0042254">
    <property type="term" value="P:ribosome biogenesis"/>
    <property type="evidence" value="ECO:0007669"/>
    <property type="project" value="UniProtKB-UniRule"/>
</dbReference>
<dbReference type="CDD" id="cd01898">
    <property type="entry name" value="Obg"/>
    <property type="match status" value="1"/>
</dbReference>
<dbReference type="FunFam" id="2.70.210.12:FF:000001">
    <property type="entry name" value="GTPase Obg"/>
    <property type="match status" value="1"/>
</dbReference>
<dbReference type="Gene3D" id="2.70.210.12">
    <property type="entry name" value="GTP1/OBG domain"/>
    <property type="match status" value="1"/>
</dbReference>
<dbReference type="Gene3D" id="3.40.50.300">
    <property type="entry name" value="P-loop containing nucleotide triphosphate hydrolases"/>
    <property type="match status" value="1"/>
</dbReference>
<dbReference type="HAMAP" id="MF_01454">
    <property type="entry name" value="GTPase_Obg"/>
    <property type="match status" value="1"/>
</dbReference>
<dbReference type="InterPro" id="IPR031167">
    <property type="entry name" value="G_OBG"/>
</dbReference>
<dbReference type="InterPro" id="IPR006073">
    <property type="entry name" value="GTP-bd"/>
</dbReference>
<dbReference type="InterPro" id="IPR014100">
    <property type="entry name" value="GTP-bd_Obg/CgtA"/>
</dbReference>
<dbReference type="InterPro" id="IPR006074">
    <property type="entry name" value="GTP1-OBG_CS"/>
</dbReference>
<dbReference type="InterPro" id="IPR006169">
    <property type="entry name" value="GTP1_OBG_dom"/>
</dbReference>
<dbReference type="InterPro" id="IPR036726">
    <property type="entry name" value="GTP1_OBG_dom_sf"/>
</dbReference>
<dbReference type="InterPro" id="IPR045086">
    <property type="entry name" value="OBG_GTPase"/>
</dbReference>
<dbReference type="InterPro" id="IPR027417">
    <property type="entry name" value="P-loop_NTPase"/>
</dbReference>
<dbReference type="NCBIfam" id="TIGR02729">
    <property type="entry name" value="Obg_CgtA"/>
    <property type="match status" value="1"/>
</dbReference>
<dbReference type="NCBIfam" id="NF008955">
    <property type="entry name" value="PRK12297.1"/>
    <property type="match status" value="1"/>
</dbReference>
<dbReference type="NCBIfam" id="NF008956">
    <property type="entry name" value="PRK12299.1"/>
    <property type="match status" value="1"/>
</dbReference>
<dbReference type="PANTHER" id="PTHR11702">
    <property type="entry name" value="DEVELOPMENTALLY REGULATED GTP-BINDING PROTEIN-RELATED"/>
    <property type="match status" value="1"/>
</dbReference>
<dbReference type="PANTHER" id="PTHR11702:SF31">
    <property type="entry name" value="MITOCHONDRIAL RIBOSOME-ASSOCIATED GTPASE 2"/>
    <property type="match status" value="1"/>
</dbReference>
<dbReference type="Pfam" id="PF01018">
    <property type="entry name" value="GTP1_OBG"/>
    <property type="match status" value="1"/>
</dbReference>
<dbReference type="Pfam" id="PF01926">
    <property type="entry name" value="MMR_HSR1"/>
    <property type="match status" value="1"/>
</dbReference>
<dbReference type="PIRSF" id="PIRSF002401">
    <property type="entry name" value="GTP_bd_Obg/CgtA"/>
    <property type="match status" value="1"/>
</dbReference>
<dbReference type="PRINTS" id="PR00326">
    <property type="entry name" value="GTP1OBG"/>
</dbReference>
<dbReference type="SUPFAM" id="SSF82051">
    <property type="entry name" value="Obg GTP-binding protein N-terminal domain"/>
    <property type="match status" value="1"/>
</dbReference>
<dbReference type="SUPFAM" id="SSF52540">
    <property type="entry name" value="P-loop containing nucleoside triphosphate hydrolases"/>
    <property type="match status" value="1"/>
</dbReference>
<dbReference type="PROSITE" id="PS51710">
    <property type="entry name" value="G_OBG"/>
    <property type="match status" value="1"/>
</dbReference>
<dbReference type="PROSITE" id="PS00905">
    <property type="entry name" value="GTP1_OBG"/>
    <property type="match status" value="1"/>
</dbReference>
<dbReference type="PROSITE" id="PS51883">
    <property type="entry name" value="OBG"/>
    <property type="match status" value="1"/>
</dbReference>
<feature type="chain" id="PRO_0000385669" description="GTPase Obg">
    <location>
        <begin position="1"/>
        <end position="406"/>
    </location>
</feature>
<feature type="domain" description="Obg" evidence="2">
    <location>
        <begin position="1"/>
        <end position="159"/>
    </location>
</feature>
<feature type="domain" description="OBG-type G" evidence="1">
    <location>
        <begin position="160"/>
        <end position="333"/>
    </location>
</feature>
<feature type="region of interest" description="Disordered" evidence="3">
    <location>
        <begin position="120"/>
        <end position="143"/>
    </location>
</feature>
<feature type="region of interest" description="Disordered" evidence="3">
    <location>
        <begin position="381"/>
        <end position="406"/>
    </location>
</feature>
<feature type="compositionally biased region" description="Acidic residues" evidence="3">
    <location>
        <begin position="383"/>
        <end position="399"/>
    </location>
</feature>
<feature type="binding site" evidence="1">
    <location>
        <begin position="166"/>
        <end position="173"/>
    </location>
    <ligand>
        <name>GTP</name>
        <dbReference type="ChEBI" id="CHEBI:37565"/>
    </ligand>
</feature>
<feature type="binding site" evidence="1">
    <location>
        <position position="173"/>
    </location>
    <ligand>
        <name>Mg(2+)</name>
        <dbReference type="ChEBI" id="CHEBI:18420"/>
    </ligand>
</feature>
<feature type="binding site" evidence="1">
    <location>
        <begin position="191"/>
        <end position="195"/>
    </location>
    <ligand>
        <name>GTP</name>
        <dbReference type="ChEBI" id="CHEBI:37565"/>
    </ligand>
</feature>
<feature type="binding site" evidence="1">
    <location>
        <position position="193"/>
    </location>
    <ligand>
        <name>Mg(2+)</name>
        <dbReference type="ChEBI" id="CHEBI:18420"/>
    </ligand>
</feature>
<feature type="binding site" evidence="1">
    <location>
        <begin position="213"/>
        <end position="216"/>
    </location>
    <ligand>
        <name>GTP</name>
        <dbReference type="ChEBI" id="CHEBI:37565"/>
    </ligand>
</feature>
<feature type="binding site" evidence="1">
    <location>
        <begin position="283"/>
        <end position="286"/>
    </location>
    <ligand>
        <name>GTP</name>
        <dbReference type="ChEBI" id="CHEBI:37565"/>
    </ligand>
</feature>
<feature type="binding site" evidence="1">
    <location>
        <begin position="314"/>
        <end position="316"/>
    </location>
    <ligand>
        <name>GTP</name>
        <dbReference type="ChEBI" id="CHEBI:37565"/>
    </ligand>
</feature>
<protein>
    <recommendedName>
        <fullName evidence="1">GTPase Obg</fullName>
        <ecNumber evidence="1">3.6.5.-</ecNumber>
    </recommendedName>
    <alternativeName>
        <fullName evidence="1">GTP-binding protein Obg</fullName>
    </alternativeName>
</protein>
<gene>
    <name evidence="1" type="primary">obg</name>
    <name type="ordered locus">ABAYE0961</name>
</gene>
<accession>B0VCR5</accession>
<comment type="function">
    <text evidence="1">An essential GTPase which binds GTP, GDP and possibly (p)ppGpp with moderate affinity, with high nucleotide exchange rates and a fairly low GTP hydrolysis rate. Plays a role in control of the cell cycle, stress response, ribosome biogenesis and in those bacteria that undergo differentiation, in morphogenesis control.</text>
</comment>
<comment type="cofactor">
    <cofactor evidence="1">
        <name>Mg(2+)</name>
        <dbReference type="ChEBI" id="CHEBI:18420"/>
    </cofactor>
</comment>
<comment type="subunit">
    <text evidence="1">Monomer.</text>
</comment>
<comment type="subcellular location">
    <subcellularLocation>
        <location evidence="1">Cytoplasm</location>
    </subcellularLocation>
</comment>
<comment type="similarity">
    <text evidence="1">Belongs to the TRAFAC class OBG-HflX-like GTPase superfamily. OBG GTPase family.</text>
</comment>
<evidence type="ECO:0000255" key="1">
    <source>
        <dbReference type="HAMAP-Rule" id="MF_01454"/>
    </source>
</evidence>
<evidence type="ECO:0000255" key="2">
    <source>
        <dbReference type="PROSITE-ProRule" id="PRU01231"/>
    </source>
</evidence>
<evidence type="ECO:0000256" key="3">
    <source>
        <dbReference type="SAM" id="MobiDB-lite"/>
    </source>
</evidence>
<name>OBG_ACIBY</name>
<keyword id="KW-0963">Cytoplasm</keyword>
<keyword id="KW-0342">GTP-binding</keyword>
<keyword id="KW-0378">Hydrolase</keyword>
<keyword id="KW-0460">Magnesium</keyword>
<keyword id="KW-0479">Metal-binding</keyword>
<keyword id="KW-0547">Nucleotide-binding</keyword>